<organism>
    <name type="scientific">Yersinia pestis bv. Antiqua (strain Nepal516)</name>
    <dbReference type="NCBI Taxonomy" id="377628"/>
    <lineage>
        <taxon>Bacteria</taxon>
        <taxon>Pseudomonadati</taxon>
        <taxon>Pseudomonadota</taxon>
        <taxon>Gammaproteobacteria</taxon>
        <taxon>Enterobacterales</taxon>
        <taxon>Yersiniaceae</taxon>
        <taxon>Yersinia</taxon>
    </lineage>
</organism>
<reference key="1">
    <citation type="journal article" date="2006" name="J. Bacteriol.">
        <title>Complete genome sequence of Yersinia pestis strains Antiqua and Nepal516: evidence of gene reduction in an emerging pathogen.</title>
        <authorList>
            <person name="Chain P.S.G."/>
            <person name="Hu P."/>
            <person name="Malfatti S.A."/>
            <person name="Radnedge L."/>
            <person name="Larimer F."/>
            <person name="Vergez L.M."/>
            <person name="Worsham P."/>
            <person name="Chu M.C."/>
            <person name="Andersen G.L."/>
        </authorList>
    </citation>
    <scope>NUCLEOTIDE SEQUENCE [LARGE SCALE GENOMIC DNA]</scope>
    <source>
        <strain>Nepal516</strain>
    </source>
</reference>
<reference key="2">
    <citation type="submission" date="2009-04" db="EMBL/GenBank/DDBJ databases">
        <title>Yersinia pestis Nepal516A whole genome shotgun sequencing project.</title>
        <authorList>
            <person name="Plunkett G. III"/>
            <person name="Anderson B.D."/>
            <person name="Baumler D.J."/>
            <person name="Burland V."/>
            <person name="Cabot E.L."/>
            <person name="Glasner J.D."/>
            <person name="Mau B."/>
            <person name="Neeno-Eckwall E."/>
            <person name="Perna N.T."/>
            <person name="Munk A.C."/>
            <person name="Tapia R."/>
            <person name="Green L.D."/>
            <person name="Rogers Y.C."/>
            <person name="Detter J.C."/>
            <person name="Bruce D.C."/>
            <person name="Brettin T.S."/>
        </authorList>
    </citation>
    <scope>NUCLEOTIDE SEQUENCE [LARGE SCALE GENOMIC DNA]</scope>
    <source>
        <strain>Nepal516</strain>
    </source>
</reference>
<proteinExistence type="inferred from homology"/>
<dbReference type="EC" id="3.1.26.4" evidence="1"/>
<dbReference type="EMBL" id="CP000305">
    <property type="protein sequence ID" value="ABG19244.1"/>
    <property type="molecule type" value="Genomic_DNA"/>
</dbReference>
<dbReference type="EMBL" id="ACNQ01000017">
    <property type="protein sequence ID" value="EEO75393.1"/>
    <property type="molecule type" value="Genomic_DNA"/>
</dbReference>
<dbReference type="RefSeq" id="WP_002210699.1">
    <property type="nucleotide sequence ID" value="NZ_ACNQ01000017.1"/>
</dbReference>
<dbReference type="SMR" id="Q1CFI6"/>
<dbReference type="GeneID" id="57977475"/>
<dbReference type="KEGG" id="ypn:YPN_2917"/>
<dbReference type="HOGENOM" id="CLU_030894_6_0_6"/>
<dbReference type="Proteomes" id="UP000008936">
    <property type="component" value="Chromosome"/>
</dbReference>
<dbReference type="GO" id="GO:0005737">
    <property type="term" value="C:cytoplasm"/>
    <property type="evidence" value="ECO:0007669"/>
    <property type="project" value="UniProtKB-SubCell"/>
</dbReference>
<dbReference type="GO" id="GO:0000287">
    <property type="term" value="F:magnesium ion binding"/>
    <property type="evidence" value="ECO:0007669"/>
    <property type="project" value="UniProtKB-UniRule"/>
</dbReference>
<dbReference type="GO" id="GO:0003676">
    <property type="term" value="F:nucleic acid binding"/>
    <property type="evidence" value="ECO:0007669"/>
    <property type="project" value="InterPro"/>
</dbReference>
<dbReference type="GO" id="GO:0004523">
    <property type="term" value="F:RNA-DNA hybrid ribonuclease activity"/>
    <property type="evidence" value="ECO:0007669"/>
    <property type="project" value="UniProtKB-UniRule"/>
</dbReference>
<dbReference type="GO" id="GO:0043137">
    <property type="term" value="P:DNA replication, removal of RNA primer"/>
    <property type="evidence" value="ECO:0007669"/>
    <property type="project" value="TreeGrafter"/>
</dbReference>
<dbReference type="CDD" id="cd09278">
    <property type="entry name" value="RNase_HI_prokaryote_like"/>
    <property type="match status" value="1"/>
</dbReference>
<dbReference type="FunFam" id="3.30.420.10:FF:000008">
    <property type="entry name" value="Ribonuclease H"/>
    <property type="match status" value="1"/>
</dbReference>
<dbReference type="Gene3D" id="3.30.420.10">
    <property type="entry name" value="Ribonuclease H-like superfamily/Ribonuclease H"/>
    <property type="match status" value="1"/>
</dbReference>
<dbReference type="HAMAP" id="MF_00042">
    <property type="entry name" value="RNase_H"/>
    <property type="match status" value="1"/>
</dbReference>
<dbReference type="InterPro" id="IPR050092">
    <property type="entry name" value="RNase_H"/>
</dbReference>
<dbReference type="InterPro" id="IPR012337">
    <property type="entry name" value="RNaseH-like_sf"/>
</dbReference>
<dbReference type="InterPro" id="IPR002156">
    <property type="entry name" value="RNaseH_domain"/>
</dbReference>
<dbReference type="InterPro" id="IPR036397">
    <property type="entry name" value="RNaseH_sf"/>
</dbReference>
<dbReference type="InterPro" id="IPR022892">
    <property type="entry name" value="RNaseHI"/>
</dbReference>
<dbReference type="NCBIfam" id="NF001236">
    <property type="entry name" value="PRK00203.1"/>
    <property type="match status" value="1"/>
</dbReference>
<dbReference type="PANTHER" id="PTHR10642">
    <property type="entry name" value="RIBONUCLEASE H1"/>
    <property type="match status" value="1"/>
</dbReference>
<dbReference type="PANTHER" id="PTHR10642:SF26">
    <property type="entry name" value="RIBONUCLEASE H1"/>
    <property type="match status" value="1"/>
</dbReference>
<dbReference type="Pfam" id="PF00075">
    <property type="entry name" value="RNase_H"/>
    <property type="match status" value="1"/>
</dbReference>
<dbReference type="SUPFAM" id="SSF53098">
    <property type="entry name" value="Ribonuclease H-like"/>
    <property type="match status" value="1"/>
</dbReference>
<dbReference type="PROSITE" id="PS50879">
    <property type="entry name" value="RNASE_H_1"/>
    <property type="match status" value="1"/>
</dbReference>
<protein>
    <recommendedName>
        <fullName evidence="1">Ribonuclease H</fullName>
        <shortName evidence="1">RNase H</shortName>
        <ecNumber evidence="1">3.1.26.4</ecNumber>
    </recommendedName>
</protein>
<keyword id="KW-0963">Cytoplasm</keyword>
<keyword id="KW-0255">Endonuclease</keyword>
<keyword id="KW-0378">Hydrolase</keyword>
<keyword id="KW-0460">Magnesium</keyword>
<keyword id="KW-0479">Metal-binding</keyword>
<keyword id="KW-0540">Nuclease</keyword>
<comment type="function">
    <text evidence="1">Endonuclease that specifically degrades the RNA of RNA-DNA hybrids.</text>
</comment>
<comment type="catalytic activity">
    <reaction evidence="1">
        <text>Endonucleolytic cleavage to 5'-phosphomonoester.</text>
        <dbReference type="EC" id="3.1.26.4"/>
    </reaction>
</comment>
<comment type="cofactor">
    <cofactor evidence="1">
        <name>Mg(2+)</name>
        <dbReference type="ChEBI" id="CHEBI:18420"/>
    </cofactor>
    <text evidence="1">Binds 1 Mg(2+) ion per subunit. May bind a second metal ion at a regulatory site, or after substrate binding.</text>
</comment>
<comment type="subunit">
    <text evidence="1">Monomer.</text>
</comment>
<comment type="subcellular location">
    <subcellularLocation>
        <location evidence="1">Cytoplasm</location>
    </subcellularLocation>
</comment>
<comment type="similarity">
    <text evidence="1">Belongs to the RNase H family.</text>
</comment>
<name>RNH_YERPN</name>
<evidence type="ECO:0000255" key="1">
    <source>
        <dbReference type="HAMAP-Rule" id="MF_00042"/>
    </source>
</evidence>
<evidence type="ECO:0000255" key="2">
    <source>
        <dbReference type="PROSITE-ProRule" id="PRU00408"/>
    </source>
</evidence>
<sequence>MTKQVEIFTDGSCLGNPGPGGYGAILRYKQHEKTFSAGYYLTTNNRMELMAAIVALEALTSPCEVTLSTDSQYVRQGITQWIHNWKKRGWKTADRKPVRNVDLWQRLDLAIQSHTIQWEWVKGHAGHPENERCDELARQGANSPTLDDTGYNPD</sequence>
<accession>Q1CFI6</accession>
<accession>C4GWU3</accession>
<feature type="chain" id="PRO_1000074687" description="Ribonuclease H">
    <location>
        <begin position="1"/>
        <end position="154"/>
    </location>
</feature>
<feature type="domain" description="RNase H type-1" evidence="2">
    <location>
        <begin position="1"/>
        <end position="142"/>
    </location>
</feature>
<feature type="binding site" evidence="1">
    <location>
        <position position="10"/>
    </location>
    <ligand>
        <name>Mg(2+)</name>
        <dbReference type="ChEBI" id="CHEBI:18420"/>
        <label>1</label>
    </ligand>
</feature>
<feature type="binding site" evidence="1">
    <location>
        <position position="10"/>
    </location>
    <ligand>
        <name>Mg(2+)</name>
        <dbReference type="ChEBI" id="CHEBI:18420"/>
        <label>2</label>
    </ligand>
</feature>
<feature type="binding site" evidence="1">
    <location>
        <position position="48"/>
    </location>
    <ligand>
        <name>Mg(2+)</name>
        <dbReference type="ChEBI" id="CHEBI:18420"/>
        <label>1</label>
    </ligand>
</feature>
<feature type="binding site" evidence="1">
    <location>
        <position position="70"/>
    </location>
    <ligand>
        <name>Mg(2+)</name>
        <dbReference type="ChEBI" id="CHEBI:18420"/>
        <label>1</label>
    </ligand>
</feature>
<feature type="binding site" evidence="1">
    <location>
        <position position="134"/>
    </location>
    <ligand>
        <name>Mg(2+)</name>
        <dbReference type="ChEBI" id="CHEBI:18420"/>
        <label>2</label>
    </ligand>
</feature>
<gene>
    <name evidence="1" type="primary">rnhA</name>
    <name type="ordered locus">YPN_2917</name>
    <name type="ORF">YP516_3302</name>
</gene>